<sequence>MASGILVNIKEEVTCPICLELLTEPLSLHCGHSFCQACITANHKKSMLYKEGERSCPVCRISYQPENIRPNRHVANIVEKLREVKLSPEEGQKVDHCARHGEKLLLFCQEDRKVICWLCERSQEHRGHHTFLMEEVAQEYHVKLQTALEMLRQKQQEAEKLEADIREEKASWKIQIDYDKTNVLADFEQLREILDWEESNELQNLEKEEEDILKSLTKSETEMVQQTQYMRELVSDLEHRLQGSVMELLQGVDGIIKRIEDMTLKKPKTFPKNQRRVFRAPDLKGMLDMFRELTDVRRYWVDVTLAPNNISHAVIAEDKRRVSSPNPQIMYRAQGTLFQSLKNFIYCTGVLGSQSITSGKHYWEVDVSKKSAWILGVCAGFQPDAMYNIEQNENYQPKYGYWVIGLQEGVKYSVFQDGSSHTPFAPFIVPLSVIICPDRVGVFVDYEACTVSFFNITNHGFLIYKFSQCSFSKPVFPYLNPRKCTVPMTLCSPSS</sequence>
<organism>
    <name type="scientific">Colobus guereza</name>
    <name type="common">Mantled guereza</name>
    <name type="synonym">Eastern black-and-white colobus monkey</name>
    <dbReference type="NCBI Taxonomy" id="33548"/>
    <lineage>
        <taxon>Eukaryota</taxon>
        <taxon>Metazoa</taxon>
        <taxon>Chordata</taxon>
        <taxon>Craniata</taxon>
        <taxon>Vertebrata</taxon>
        <taxon>Euteleostomi</taxon>
        <taxon>Mammalia</taxon>
        <taxon>Eutheria</taxon>
        <taxon>Euarchontoglires</taxon>
        <taxon>Primates</taxon>
        <taxon>Haplorrhini</taxon>
        <taxon>Catarrhini</taxon>
        <taxon>Cercopithecidae</taxon>
        <taxon>Colobinae</taxon>
        <taxon>Colobus</taxon>
    </lineage>
</organism>
<proteinExistence type="inferred from homology"/>
<keyword id="KW-0007">Acetylation</keyword>
<keyword id="KW-0051">Antiviral defense</keyword>
<keyword id="KW-0072">Autophagy</keyword>
<keyword id="KW-0175">Coiled coil</keyword>
<keyword id="KW-0963">Cytoplasm</keyword>
<keyword id="KW-0391">Immunity</keyword>
<keyword id="KW-0399">Innate immunity</keyword>
<keyword id="KW-0479">Metal-binding</keyword>
<keyword id="KW-0539">Nucleus</keyword>
<keyword id="KW-0597">Phosphoprotein</keyword>
<keyword id="KW-0808">Transferase</keyword>
<keyword id="KW-0832">Ubl conjugation</keyword>
<keyword id="KW-0833">Ubl conjugation pathway</keyword>
<keyword id="KW-0862">Zinc</keyword>
<keyword id="KW-0863">Zinc-finger</keyword>
<evidence type="ECO:0000250" key="1"/>
<evidence type="ECO:0000250" key="2">
    <source>
        <dbReference type="UniProtKB" id="Q0PF16"/>
    </source>
</evidence>
<evidence type="ECO:0000250" key="3">
    <source>
        <dbReference type="UniProtKB" id="Q9C035"/>
    </source>
</evidence>
<evidence type="ECO:0000255" key="4"/>
<evidence type="ECO:0000255" key="5">
    <source>
        <dbReference type="PROSITE-ProRule" id="PRU00024"/>
    </source>
</evidence>
<evidence type="ECO:0000255" key="6">
    <source>
        <dbReference type="PROSITE-ProRule" id="PRU00175"/>
    </source>
</evidence>
<evidence type="ECO:0000255" key="7">
    <source>
        <dbReference type="PROSITE-ProRule" id="PRU00548"/>
    </source>
</evidence>
<evidence type="ECO:0000305" key="8"/>
<protein>
    <recommendedName>
        <fullName>Tripartite motif-containing protein 5</fullName>
        <ecNumber>2.3.2.27</ecNumber>
    </recommendedName>
    <alternativeName>
        <fullName evidence="8">RING-type E3 ubiquitin transferase TRIM5</fullName>
    </alternativeName>
    <alternativeName>
        <fullName>TRIM5alpha</fullName>
    </alternativeName>
</protein>
<name>TRIM5_COLGU</name>
<reference key="1">
    <citation type="journal article" date="2005" name="Proc. Natl. Acad. Sci. U.S.A.">
        <title>Positive selection of primate TRIM5alpha identifies a critical species-specific retroviral restriction domain.</title>
        <authorList>
            <person name="Sawyer S.L."/>
            <person name="Wu L.I."/>
            <person name="Emerman M."/>
            <person name="Malik H.S."/>
        </authorList>
    </citation>
    <scope>NUCLEOTIDE SEQUENCE [GENOMIC DNA]</scope>
</reference>
<reference key="2">
    <citation type="journal article" date="2005" name="J. Virol.">
        <title>The B30.2(SPRY) domain of the retroviral restriction factor TRIM5alpha exhibits lineage-specific length and sequence variation in primates.</title>
        <authorList>
            <person name="Song B."/>
            <person name="Gold B."/>
            <person name="O'Huigin C."/>
            <person name="Javanbakht H."/>
            <person name="Li X."/>
            <person name="Stremlau M."/>
            <person name="Winkler C."/>
            <person name="Dean M."/>
            <person name="Sodroski J."/>
        </authorList>
    </citation>
    <scope>NUCLEOTIDE SEQUENCE [GENOMIC DNA] OF 301-495</scope>
    <source>
        <strain>B16</strain>
    </source>
</reference>
<comment type="function">
    <text evidence="3">Capsid-specific restriction factor that prevents infection from non-host-adapted retroviruses. Blocks viral replication early in the life cycle, after viral entry but before reverse transcription. In addition to acting as a capsid-specific restriction factor, also acts as a pattern recognition receptor that activates innate immune signaling in response to the retroviral capsid lattice. Binding to the viral capsid triggers its E3 ubiquitin ligase activity, and in concert with the heterodimeric ubiquitin conjugating enzyme complex UBE2V1-UBE2N (also known as UBC13-UEV1A complex) generates 'Lys-63'-linked polyubiquitin chains, which in turn are catalysts in the autophosphorylation of the MAP3K7/TAK1 complex (includes TAK1, TAB2, and TAB3). Activation of the MAP3K7/TAK1 complex by autophosphorylation results in the induction and expression of NF-kappa-B and MAPK-responsive inflammatory genes, thereby leading to an innate immune response in the infected cell. Plays a role in regulating autophagy through activation of autophagy regulator BECN1 by causing its dissociation from its inhibitors BCL2 and TAB2.</text>
</comment>
<comment type="catalytic activity">
    <reaction>
        <text>S-ubiquitinyl-[E2 ubiquitin-conjugating enzyme]-L-cysteine + [acceptor protein]-L-lysine = [E2 ubiquitin-conjugating enzyme]-L-cysteine + N(6)-ubiquitinyl-[acceptor protein]-L-lysine.</text>
        <dbReference type="EC" id="2.3.2.27"/>
    </reaction>
</comment>
<comment type="pathway">
    <text>Protein modification; protein ubiquitination.</text>
</comment>
<comment type="subunit">
    <text evidence="2 3">Can form homodimers and homotrimers. In addition to lower-order dimerization, also exhibits a higher-order multimerization and both low- and high-order multimerizations are essential for its restriction activity. Interacts with BTBD1 and BTBD2. Interacts with PSMC4, PSMC5, PSMD7 and HSPA8/HSC70. Interacts (via B30.2/SPRY domain) with HSPA1A/B. Interacts with PSMC2, MAP3K7/TAK1, TAB2 and TAB3. Interacts with SQSTM1. Interacts with TRIM6 and TRIM34. Interacts with ULK1 (phosphorylated form), GABARAP, GABARAPL1, GABARAPL2, MAP1LC3A, MAP1LC3C and BECN1.</text>
</comment>
<comment type="subcellular location">
    <subcellularLocation>
        <location evidence="2">Cytoplasm</location>
    </subcellularLocation>
    <subcellularLocation>
        <location evidence="2">Nucleus</location>
    </subcellularLocation>
    <text evidence="2">Predominantly localizes in cytoplasmic bodies. Localization may be influenced by the coexpression of other TRIM proteins, hence partial nuclear localization is observed in the presence of TRIM22 or TRIM27. In cytoplasmic bodies, colocalizes with proteasomal subunits and SQSTM1.</text>
</comment>
<comment type="domain">
    <text evidence="2 3">The B box-type zinc finger domain and the coiled-coil domain contribute to the higher and low order multimerization respectively which is essential for restriction activity. The coiled coil domain is important for higher order multimerization by promoting the initial dimerization.</text>
</comment>
<comment type="domain">
    <text evidence="1">The B30.2/SPRY domain acts as a capsid recognition domain. Polymorphisms in this domain explain the observed species-specific differences among orthologs (By similarity).</text>
</comment>
<comment type="domain">
    <text evidence="1">The RING-type zinc finger domain confers E3 ubiquitin ligase activity and is essential for retrovirus restriction activity, autoubiquitination and higher-order multimerization.</text>
</comment>
<comment type="PTM">
    <text evidence="1">Degraded in a proteasome-independent fashion in the absence of viral infection but in a proteasome-dependent fashion following exposure to restriction sensitive virus.</text>
</comment>
<comment type="PTM">
    <text evidence="1">Autoubiquitinated in a RING finger- and UBE2D2-dependent manner. Monoubiquitinated by TRIM21. Deubiquitinated by Yersinia YopJ. Ubiquitination may not lead to proteasomal degradation (By similarity).</text>
</comment>
<comment type="similarity">
    <text evidence="8">Belongs to the TRIM/RBCC family.</text>
</comment>
<feature type="initiator methionine" description="Removed" evidence="3">
    <location>
        <position position="1"/>
    </location>
</feature>
<feature type="chain" id="PRO_0000273456" description="Tripartite motif-containing protein 5">
    <location>
        <begin position="2"/>
        <end position="495"/>
    </location>
</feature>
<feature type="domain" description="B30.2/SPRY" evidence="7">
    <location>
        <begin position="283"/>
        <end position="495"/>
    </location>
</feature>
<feature type="zinc finger region" description="RING-type" evidence="6">
    <location>
        <begin position="15"/>
        <end position="60"/>
    </location>
</feature>
<feature type="zinc finger region" description="B box-type" evidence="5">
    <location>
        <begin position="92"/>
        <end position="133"/>
    </location>
</feature>
<feature type="region of interest" description="Required for interaction with GABARAP and for autophagy" evidence="2">
    <location>
        <begin position="187"/>
        <end position="200"/>
    </location>
</feature>
<feature type="coiled-coil region" evidence="4">
    <location>
        <begin position="137"/>
        <end position="225"/>
    </location>
</feature>
<feature type="binding site" evidence="5">
    <location>
        <position position="97"/>
    </location>
    <ligand>
        <name>Zn(2+)</name>
        <dbReference type="ChEBI" id="CHEBI:29105"/>
    </ligand>
</feature>
<feature type="binding site" evidence="5">
    <location>
        <position position="100"/>
    </location>
    <ligand>
        <name>Zn(2+)</name>
        <dbReference type="ChEBI" id="CHEBI:29105"/>
    </ligand>
</feature>
<feature type="binding site" evidence="5">
    <location>
        <position position="119"/>
    </location>
    <ligand>
        <name>Zn(2+)</name>
        <dbReference type="ChEBI" id="CHEBI:29105"/>
    </ligand>
</feature>
<feature type="binding site" evidence="5">
    <location>
        <position position="125"/>
    </location>
    <ligand>
        <name>Zn(2+)</name>
        <dbReference type="ChEBI" id="CHEBI:29105"/>
    </ligand>
</feature>
<feature type="modified residue" description="N-acetylalanine" evidence="3">
    <location>
        <position position="2"/>
    </location>
</feature>
<feature type="modified residue" description="Phosphoserine" evidence="3">
    <location>
        <position position="87"/>
    </location>
</feature>
<feature type="sequence conflict" description="In Ref. 2; AAW55817." evidence="8" ref="2">
    <original>QN</original>
    <variation>RD</variation>
    <location>
        <begin position="391"/>
        <end position="392"/>
    </location>
</feature>
<feature type="sequence conflict" description="In Ref. 2; AAW55817." evidence="8" ref="2">
    <original>E</original>
    <variation>K</variation>
    <location>
        <position position="408"/>
    </location>
</feature>
<accession>Q5D7J0</accession>
<accession>Q50EX2</accession>
<gene>
    <name type="primary">TRIM5</name>
</gene>
<dbReference type="EC" id="2.3.2.27"/>
<dbReference type="EMBL" id="AY843507">
    <property type="protein sequence ID" value="AAV91978.1"/>
    <property type="molecule type" value="Genomic_DNA"/>
</dbReference>
<dbReference type="EMBL" id="AY710298">
    <property type="protein sequence ID" value="AAW55817.1"/>
    <property type="molecule type" value="Genomic_DNA"/>
</dbReference>
<dbReference type="SMR" id="Q5D7J0"/>
<dbReference type="UniPathway" id="UPA00143"/>
<dbReference type="GO" id="GO:0005634">
    <property type="term" value="C:nucleus"/>
    <property type="evidence" value="ECO:0007669"/>
    <property type="project" value="UniProtKB-SubCell"/>
</dbReference>
<dbReference type="GO" id="GO:0000932">
    <property type="term" value="C:P-body"/>
    <property type="evidence" value="ECO:0000250"/>
    <property type="project" value="UniProtKB"/>
</dbReference>
<dbReference type="GO" id="GO:0038187">
    <property type="term" value="F:pattern recognition receptor activity"/>
    <property type="evidence" value="ECO:0000250"/>
    <property type="project" value="UniProtKB"/>
</dbReference>
<dbReference type="GO" id="GO:0004842">
    <property type="term" value="F:ubiquitin-protein transferase activity"/>
    <property type="evidence" value="ECO:0000250"/>
    <property type="project" value="UniProtKB"/>
</dbReference>
<dbReference type="GO" id="GO:0008270">
    <property type="term" value="F:zinc ion binding"/>
    <property type="evidence" value="ECO:0007669"/>
    <property type="project" value="UniProtKB-KW"/>
</dbReference>
<dbReference type="GO" id="GO:0002218">
    <property type="term" value="P:activation of innate immune response"/>
    <property type="evidence" value="ECO:0000250"/>
    <property type="project" value="UniProtKB"/>
</dbReference>
<dbReference type="GO" id="GO:0006914">
    <property type="term" value="P:autophagy"/>
    <property type="evidence" value="ECO:0007669"/>
    <property type="project" value="UniProtKB-KW"/>
</dbReference>
<dbReference type="GO" id="GO:0051607">
    <property type="term" value="P:defense response to virus"/>
    <property type="evidence" value="ECO:0007669"/>
    <property type="project" value="UniProtKB-KW"/>
</dbReference>
<dbReference type="GO" id="GO:0045087">
    <property type="term" value="P:innate immune response"/>
    <property type="evidence" value="ECO:0007669"/>
    <property type="project" value="UniProtKB-KW"/>
</dbReference>
<dbReference type="GO" id="GO:0043123">
    <property type="term" value="P:positive regulation of canonical NF-kappaB signal transduction"/>
    <property type="evidence" value="ECO:0000250"/>
    <property type="project" value="UniProtKB"/>
</dbReference>
<dbReference type="GO" id="GO:0043410">
    <property type="term" value="P:positive regulation of MAPK cascade"/>
    <property type="evidence" value="ECO:0000250"/>
    <property type="project" value="UniProtKB"/>
</dbReference>
<dbReference type="GO" id="GO:0051092">
    <property type="term" value="P:positive regulation of NF-kappaB transcription factor activity"/>
    <property type="evidence" value="ECO:0000250"/>
    <property type="project" value="UniProtKB"/>
</dbReference>
<dbReference type="GO" id="GO:0070534">
    <property type="term" value="P:protein K63-linked ubiquitination"/>
    <property type="evidence" value="ECO:0000250"/>
    <property type="project" value="UniProtKB"/>
</dbReference>
<dbReference type="GO" id="GO:0031664">
    <property type="term" value="P:regulation of lipopolysaccharide-mediated signaling pathway"/>
    <property type="evidence" value="ECO:0000250"/>
    <property type="project" value="UniProtKB"/>
</dbReference>
<dbReference type="CDD" id="cd19761">
    <property type="entry name" value="Bbox2_TRIM5-like"/>
    <property type="match status" value="1"/>
</dbReference>
<dbReference type="CDD" id="cd16591">
    <property type="entry name" value="RING-HC_TRIM5-like_C-IV"/>
    <property type="match status" value="1"/>
</dbReference>
<dbReference type="CDD" id="cd15822">
    <property type="entry name" value="SPRY_PRY_TRIM5"/>
    <property type="match status" value="1"/>
</dbReference>
<dbReference type="FunFam" id="2.60.120.920:FF:000023">
    <property type="entry name" value="Tripartite motif-containing 5 (Predicted)"/>
    <property type="match status" value="1"/>
</dbReference>
<dbReference type="FunFam" id="3.30.160.60:FF:000386">
    <property type="entry name" value="Tripartite motif-containing 5 (Predicted)"/>
    <property type="match status" value="1"/>
</dbReference>
<dbReference type="FunFam" id="3.30.40.10:FF:000144">
    <property type="entry name" value="Tripartite motif-containing 5 (Predicted)"/>
    <property type="match status" value="1"/>
</dbReference>
<dbReference type="Gene3D" id="2.60.120.920">
    <property type="match status" value="1"/>
</dbReference>
<dbReference type="Gene3D" id="3.30.160.60">
    <property type="entry name" value="Classic Zinc Finger"/>
    <property type="match status" value="1"/>
</dbReference>
<dbReference type="Gene3D" id="3.30.40.10">
    <property type="entry name" value="Zinc/RING finger domain, C3HC4 (zinc finger)"/>
    <property type="match status" value="1"/>
</dbReference>
<dbReference type="InterPro" id="IPR001870">
    <property type="entry name" value="B30.2/SPRY"/>
</dbReference>
<dbReference type="InterPro" id="IPR043136">
    <property type="entry name" value="B30.2/SPRY_sf"/>
</dbReference>
<dbReference type="InterPro" id="IPR003879">
    <property type="entry name" value="Butyrophylin_SPRY"/>
</dbReference>
<dbReference type="InterPro" id="IPR013320">
    <property type="entry name" value="ConA-like_dom_sf"/>
</dbReference>
<dbReference type="InterPro" id="IPR003877">
    <property type="entry name" value="SPRY_dom"/>
</dbReference>
<dbReference type="InterPro" id="IPR050143">
    <property type="entry name" value="TRIM/RBCC"/>
</dbReference>
<dbReference type="InterPro" id="IPR027370">
    <property type="entry name" value="Znf-RING_euk"/>
</dbReference>
<dbReference type="InterPro" id="IPR000315">
    <property type="entry name" value="Znf_B-box"/>
</dbReference>
<dbReference type="InterPro" id="IPR001841">
    <property type="entry name" value="Znf_RING"/>
</dbReference>
<dbReference type="InterPro" id="IPR013083">
    <property type="entry name" value="Znf_RING/FYVE/PHD"/>
</dbReference>
<dbReference type="InterPro" id="IPR017907">
    <property type="entry name" value="Znf_RING_CS"/>
</dbReference>
<dbReference type="PANTHER" id="PTHR24103">
    <property type="entry name" value="E3 UBIQUITIN-PROTEIN LIGASE TRIM"/>
    <property type="match status" value="1"/>
</dbReference>
<dbReference type="Pfam" id="PF00622">
    <property type="entry name" value="SPRY"/>
    <property type="match status" value="1"/>
</dbReference>
<dbReference type="Pfam" id="PF00643">
    <property type="entry name" value="zf-B_box"/>
    <property type="match status" value="1"/>
</dbReference>
<dbReference type="Pfam" id="PF13445">
    <property type="entry name" value="zf-RING_UBOX"/>
    <property type="match status" value="1"/>
</dbReference>
<dbReference type="PRINTS" id="PR01407">
    <property type="entry name" value="BUTYPHLNCDUF"/>
</dbReference>
<dbReference type="SMART" id="SM00336">
    <property type="entry name" value="BBOX"/>
    <property type="match status" value="1"/>
</dbReference>
<dbReference type="SMART" id="SM00184">
    <property type="entry name" value="RING"/>
    <property type="match status" value="1"/>
</dbReference>
<dbReference type="SMART" id="SM00449">
    <property type="entry name" value="SPRY"/>
    <property type="match status" value="1"/>
</dbReference>
<dbReference type="SUPFAM" id="SSF57845">
    <property type="entry name" value="B-box zinc-binding domain"/>
    <property type="match status" value="1"/>
</dbReference>
<dbReference type="SUPFAM" id="SSF49899">
    <property type="entry name" value="Concanavalin A-like lectins/glucanases"/>
    <property type="match status" value="1"/>
</dbReference>
<dbReference type="SUPFAM" id="SSF57850">
    <property type="entry name" value="RING/U-box"/>
    <property type="match status" value="1"/>
</dbReference>
<dbReference type="PROSITE" id="PS50188">
    <property type="entry name" value="B302_SPRY"/>
    <property type="match status" value="1"/>
</dbReference>
<dbReference type="PROSITE" id="PS50119">
    <property type="entry name" value="ZF_BBOX"/>
    <property type="match status" value="1"/>
</dbReference>
<dbReference type="PROSITE" id="PS00518">
    <property type="entry name" value="ZF_RING_1"/>
    <property type="match status" value="1"/>
</dbReference>
<dbReference type="PROSITE" id="PS50089">
    <property type="entry name" value="ZF_RING_2"/>
    <property type="match status" value="1"/>
</dbReference>